<accession>Q6NME6</accession>
<accession>Q56ZP5</accession>
<name>RLF19_ARATH</name>
<organism>
    <name type="scientific">Arabidopsis thaliana</name>
    <name type="common">Mouse-ear cress</name>
    <dbReference type="NCBI Taxonomy" id="3702"/>
    <lineage>
        <taxon>Eukaryota</taxon>
        <taxon>Viridiplantae</taxon>
        <taxon>Streptophyta</taxon>
        <taxon>Embryophyta</taxon>
        <taxon>Tracheophyta</taxon>
        <taxon>Spermatophyta</taxon>
        <taxon>Magnoliopsida</taxon>
        <taxon>eudicotyledons</taxon>
        <taxon>Gunneridae</taxon>
        <taxon>Pentapetalae</taxon>
        <taxon>rosids</taxon>
        <taxon>malvids</taxon>
        <taxon>Brassicales</taxon>
        <taxon>Brassicaceae</taxon>
        <taxon>Camelineae</taxon>
        <taxon>Arabidopsis</taxon>
    </lineage>
</organism>
<gene>
    <name type="primary">RALFL19</name>
    <name type="ordered locus">At2g33775</name>
    <name type="ORF">T1B8</name>
</gene>
<reference key="1">
    <citation type="journal article" date="1999" name="Nature">
        <title>Sequence and analysis of chromosome 2 of the plant Arabidopsis thaliana.</title>
        <authorList>
            <person name="Lin X."/>
            <person name="Kaul S."/>
            <person name="Rounsley S.D."/>
            <person name="Shea T.P."/>
            <person name="Benito M.-I."/>
            <person name="Town C.D."/>
            <person name="Fujii C.Y."/>
            <person name="Mason T.M."/>
            <person name="Bowman C.L."/>
            <person name="Barnstead M.E."/>
            <person name="Feldblyum T.V."/>
            <person name="Buell C.R."/>
            <person name="Ketchum K.A."/>
            <person name="Lee J.J."/>
            <person name="Ronning C.M."/>
            <person name="Koo H.L."/>
            <person name="Moffat K.S."/>
            <person name="Cronin L.A."/>
            <person name="Shen M."/>
            <person name="Pai G."/>
            <person name="Van Aken S."/>
            <person name="Umayam L."/>
            <person name="Tallon L.J."/>
            <person name="Gill J.E."/>
            <person name="Adams M.D."/>
            <person name="Carrera A.J."/>
            <person name="Creasy T.H."/>
            <person name="Goodman H.M."/>
            <person name="Somerville C.R."/>
            <person name="Copenhaver G.P."/>
            <person name="Preuss D."/>
            <person name="Nierman W.C."/>
            <person name="White O."/>
            <person name="Eisen J.A."/>
            <person name="Salzberg S.L."/>
            <person name="Fraser C.M."/>
            <person name="Venter J.C."/>
        </authorList>
    </citation>
    <scope>NUCLEOTIDE SEQUENCE [LARGE SCALE GENOMIC DNA]</scope>
    <source>
        <strain>cv. Columbia</strain>
    </source>
</reference>
<reference key="2">
    <citation type="journal article" date="2017" name="Plant J.">
        <title>Araport11: a complete reannotation of the Arabidopsis thaliana reference genome.</title>
        <authorList>
            <person name="Cheng C.Y."/>
            <person name="Krishnakumar V."/>
            <person name="Chan A.P."/>
            <person name="Thibaud-Nissen F."/>
            <person name="Schobel S."/>
            <person name="Town C.D."/>
        </authorList>
    </citation>
    <scope>GENOME REANNOTATION</scope>
    <source>
        <strain>cv. Columbia</strain>
    </source>
</reference>
<reference key="3">
    <citation type="submission" date="2004-03" db="EMBL/GenBank/DDBJ databases">
        <title>Arabidopsis ORF clones.</title>
        <authorList>
            <person name="Cheuk R.F."/>
            <person name="Chen H."/>
            <person name="Kim C.J."/>
            <person name="Shinn P."/>
            <person name="Carninci P."/>
            <person name="Hayashizaki Y."/>
            <person name="Ishida J."/>
            <person name="Kamiya A."/>
            <person name="Kawai J."/>
            <person name="Narusaka M."/>
            <person name="Sakurai T."/>
            <person name="Satou M."/>
            <person name="Seki M."/>
            <person name="Shinozaki K."/>
            <person name="Ecker J.R."/>
        </authorList>
    </citation>
    <scope>NUCLEOTIDE SEQUENCE [LARGE SCALE MRNA]</scope>
    <source>
        <strain>cv. Columbia</strain>
    </source>
</reference>
<reference key="4">
    <citation type="submission" date="2005-03" db="EMBL/GenBank/DDBJ databases">
        <title>Large-scale analysis of RIKEN Arabidopsis full-length (RAFL) cDNAs.</title>
        <authorList>
            <person name="Totoki Y."/>
            <person name="Seki M."/>
            <person name="Ishida J."/>
            <person name="Nakajima M."/>
            <person name="Enju A."/>
            <person name="Kamiya A."/>
            <person name="Narusaka M."/>
            <person name="Shin-i T."/>
            <person name="Nakagawa M."/>
            <person name="Sakamoto N."/>
            <person name="Oishi K."/>
            <person name="Kohara Y."/>
            <person name="Kobayashi M."/>
            <person name="Toyoda A."/>
            <person name="Sakaki Y."/>
            <person name="Sakurai T."/>
            <person name="Iida K."/>
            <person name="Akiyama K."/>
            <person name="Satou M."/>
            <person name="Toyoda T."/>
            <person name="Konagaya A."/>
            <person name="Carninci P."/>
            <person name="Kawai J."/>
            <person name="Hayashizaki Y."/>
            <person name="Shinozaki K."/>
        </authorList>
    </citation>
    <scope>NUCLEOTIDE SEQUENCE [LARGE SCALE MRNA]</scope>
    <source>
        <strain>cv. Columbia</strain>
    </source>
</reference>
<reference key="5">
    <citation type="journal article" date="2002" name="In Silico Biol.">
        <title>Peptomics, identification of novel cationic Arabidopsis peptides with conserved sequence motifs.</title>
        <authorList>
            <person name="Olsen A.N."/>
            <person name="Mundy J."/>
            <person name="Skriver K."/>
        </authorList>
    </citation>
    <scope>GENE FAMILY</scope>
    <scope>NOMENCLATURE</scope>
</reference>
<feature type="signal peptide" evidence="2">
    <location>
        <begin position="1"/>
        <end position="23"/>
    </location>
</feature>
<feature type="propeptide" id="PRO_0000420312" description="Removed in mature form" evidence="1">
    <location>
        <begin position="24"/>
        <end position="58"/>
    </location>
</feature>
<feature type="chain" id="PRO_0000420313" description="Protein RALF-like 19">
    <location>
        <begin position="59"/>
        <end position="110"/>
    </location>
</feature>
<feature type="site" description="Required for proteolytic cleavage" evidence="1">
    <location>
        <begin position="54"/>
        <end position="55"/>
    </location>
</feature>
<feature type="disulfide bond" evidence="1">
    <location>
        <begin position="76"/>
        <end position="86"/>
    </location>
</feature>
<feature type="disulfide bond" evidence="1">
    <location>
        <begin position="99"/>
        <end position="105"/>
    </location>
</feature>
<feature type="sequence conflict" description="In Ref. 4; BAD94374." evidence="3" ref="4">
    <original>G</original>
    <variation>D</variation>
    <location>
        <position position="80"/>
    </location>
</feature>
<comment type="function">
    <text evidence="1">Cell signaling peptide that may regulate plant stress, growth, and development. Mediates a rapid alkalinization of extracellular space by mediating a transient increase in the cytoplasmic Ca(2+) concentration leading to a calcium-dependent signaling events through a cell surface receptor and a concomitant activation of some intracellular mitogen-activated protein kinases (By similarity).</text>
</comment>
<comment type="subcellular location">
    <subcellularLocation>
        <location evidence="1">Secreted</location>
    </subcellularLocation>
</comment>
<comment type="PTM">
    <text evidence="1">Proteolytically cleaved, probably by S1P, a subtilisin-like serine protease (subtilase).</text>
</comment>
<comment type="similarity">
    <text evidence="3">Belongs to the plant rapid alkalinization factor (RALF) family.</text>
</comment>
<proteinExistence type="inferred from homology"/>
<evidence type="ECO:0000250" key="1"/>
<evidence type="ECO:0000255" key="2"/>
<evidence type="ECO:0000305" key="3"/>
<dbReference type="EMBL" id="U78721">
    <property type="status" value="NOT_ANNOTATED_CDS"/>
    <property type="molecule type" value="Genomic_DNA"/>
</dbReference>
<dbReference type="EMBL" id="CP002685">
    <property type="protein sequence ID" value="AEC08883.1"/>
    <property type="molecule type" value="Genomic_DNA"/>
</dbReference>
<dbReference type="EMBL" id="BT011714">
    <property type="protein sequence ID" value="AAS49077.1"/>
    <property type="molecule type" value="mRNA"/>
</dbReference>
<dbReference type="EMBL" id="AK220918">
    <property type="protein sequence ID" value="BAD94374.1"/>
    <property type="molecule type" value="mRNA"/>
</dbReference>
<dbReference type="RefSeq" id="NP_850219.1">
    <property type="nucleotide sequence ID" value="NM_179888.4"/>
</dbReference>
<dbReference type="SMR" id="Q6NME6"/>
<dbReference type="STRING" id="3702.Q6NME6"/>
<dbReference type="PaxDb" id="3702-AT2G33775.1"/>
<dbReference type="ProteomicsDB" id="228003"/>
<dbReference type="EnsemblPlants" id="AT2G33775.1">
    <property type="protein sequence ID" value="AT2G33775.1"/>
    <property type="gene ID" value="AT2G33775"/>
</dbReference>
<dbReference type="GeneID" id="817944"/>
<dbReference type="Gramene" id="AT2G33775.1">
    <property type="protein sequence ID" value="AT2G33775.1"/>
    <property type="gene ID" value="AT2G33775"/>
</dbReference>
<dbReference type="KEGG" id="ath:AT2G33775"/>
<dbReference type="Araport" id="AT2G33775"/>
<dbReference type="TAIR" id="AT2G33775">
    <property type="gene designation" value="RALFL19"/>
</dbReference>
<dbReference type="eggNOG" id="ENOG502S8YN">
    <property type="taxonomic scope" value="Eukaryota"/>
</dbReference>
<dbReference type="HOGENOM" id="CLU_127895_0_1_1"/>
<dbReference type="InParanoid" id="Q6NME6"/>
<dbReference type="OMA" id="GICIGEC"/>
<dbReference type="OrthoDB" id="1613518at2759"/>
<dbReference type="PhylomeDB" id="Q6NME6"/>
<dbReference type="PRO" id="PR:Q6NME6"/>
<dbReference type="Proteomes" id="UP000006548">
    <property type="component" value="Chromosome 2"/>
</dbReference>
<dbReference type="ExpressionAtlas" id="Q6NME6">
    <property type="expression patterns" value="baseline and differential"/>
</dbReference>
<dbReference type="GO" id="GO:0048046">
    <property type="term" value="C:apoplast"/>
    <property type="evidence" value="ECO:0000250"/>
    <property type="project" value="TAIR"/>
</dbReference>
<dbReference type="GO" id="GO:0090406">
    <property type="term" value="C:pollen tube"/>
    <property type="evidence" value="ECO:0000314"/>
    <property type="project" value="TAIR"/>
</dbReference>
<dbReference type="GO" id="GO:0005179">
    <property type="term" value="F:hormone activity"/>
    <property type="evidence" value="ECO:0000250"/>
    <property type="project" value="UniProtKB"/>
</dbReference>
<dbReference type="GO" id="GO:0019722">
    <property type="term" value="P:calcium-mediated signaling"/>
    <property type="evidence" value="ECO:0000250"/>
    <property type="project" value="UniProtKB"/>
</dbReference>
<dbReference type="GO" id="GO:0007267">
    <property type="term" value="P:cell-cell signaling"/>
    <property type="evidence" value="ECO:0000250"/>
    <property type="project" value="TAIR"/>
</dbReference>
<dbReference type="GO" id="GO:0080092">
    <property type="term" value="P:regulation of pollen tube growth"/>
    <property type="evidence" value="ECO:0000316"/>
    <property type="project" value="TAIR"/>
</dbReference>
<dbReference type="InterPro" id="IPR008801">
    <property type="entry name" value="RALF"/>
</dbReference>
<dbReference type="PANTHER" id="PTHR33136:SF89">
    <property type="entry name" value="PROTEIN RALF-LIKE 19"/>
    <property type="match status" value="1"/>
</dbReference>
<dbReference type="PANTHER" id="PTHR33136">
    <property type="entry name" value="RAPID ALKALINIZATION FACTOR-LIKE"/>
    <property type="match status" value="1"/>
</dbReference>
<dbReference type="Pfam" id="PF05498">
    <property type="entry name" value="RALF"/>
    <property type="match status" value="1"/>
</dbReference>
<sequence length="110" mass="12397">MGIKILLILGLLTLAVVAESANATWTLTKSCVNGQGCIGEDGELDYLMDSETNRRQLAARRSYISYGALRKNNVPCSRRGRSYYDCKKRKRANPYRRGCSVITHCYRQTS</sequence>
<keyword id="KW-1015">Disulfide bond</keyword>
<keyword id="KW-0372">Hormone</keyword>
<keyword id="KW-1185">Reference proteome</keyword>
<keyword id="KW-0964">Secreted</keyword>
<keyword id="KW-0732">Signal</keyword>
<protein>
    <recommendedName>
        <fullName>Protein RALF-like 19</fullName>
    </recommendedName>
</protein>